<feature type="chain" id="PRO_1000184321" description="ATP synthase subunit c">
    <location>
        <begin position="1"/>
        <end position="82"/>
    </location>
</feature>
<feature type="transmembrane region" description="Helical" evidence="1">
    <location>
        <begin position="7"/>
        <end position="27"/>
    </location>
</feature>
<feature type="transmembrane region" description="Helical" evidence="1">
    <location>
        <begin position="53"/>
        <end position="73"/>
    </location>
</feature>
<feature type="site" description="Reversibly protonated during proton transport" evidence="1">
    <location>
        <position position="60"/>
    </location>
</feature>
<name>ATPL_AROAE</name>
<sequence>MENVLGFVALAAGLIIGLGAIGACIGIGIMGSKYLEASARQPELMNALQTKMFLLAGLIDAAFLIGVGIAMMFAFANPFQLV</sequence>
<protein>
    <recommendedName>
        <fullName evidence="1">ATP synthase subunit c</fullName>
    </recommendedName>
    <alternativeName>
        <fullName evidence="1">ATP synthase F(0) sector subunit c</fullName>
    </alternativeName>
    <alternativeName>
        <fullName evidence="1">F-type ATPase subunit c</fullName>
        <shortName evidence="1">F-ATPase subunit c</shortName>
    </alternativeName>
    <alternativeName>
        <fullName evidence="1">Lipid-binding protein</fullName>
    </alternativeName>
</protein>
<reference key="1">
    <citation type="journal article" date="2005" name="Arch. Microbiol.">
        <title>The genome sequence of an anaerobic aromatic-degrading denitrifying bacterium, strain EbN1.</title>
        <authorList>
            <person name="Rabus R."/>
            <person name="Kube M."/>
            <person name="Heider J."/>
            <person name="Beck A."/>
            <person name="Heitmann K."/>
            <person name="Widdel F."/>
            <person name="Reinhardt R."/>
        </authorList>
    </citation>
    <scope>NUCLEOTIDE SEQUENCE [LARGE SCALE GENOMIC DNA]</scope>
    <source>
        <strain>DSM 19018 / LMG 30748 / EbN1</strain>
    </source>
</reference>
<gene>
    <name evidence="1" type="primary">atpE</name>
    <name type="ordered locus">AZOSEA16910</name>
    <name type="ORF">ebA3000</name>
</gene>
<evidence type="ECO:0000255" key="1">
    <source>
        <dbReference type="HAMAP-Rule" id="MF_01396"/>
    </source>
</evidence>
<keyword id="KW-0066">ATP synthesis</keyword>
<keyword id="KW-0997">Cell inner membrane</keyword>
<keyword id="KW-1003">Cell membrane</keyword>
<keyword id="KW-0138">CF(0)</keyword>
<keyword id="KW-0375">Hydrogen ion transport</keyword>
<keyword id="KW-0406">Ion transport</keyword>
<keyword id="KW-0446">Lipid-binding</keyword>
<keyword id="KW-0472">Membrane</keyword>
<keyword id="KW-1185">Reference proteome</keyword>
<keyword id="KW-0812">Transmembrane</keyword>
<keyword id="KW-1133">Transmembrane helix</keyword>
<keyword id="KW-0813">Transport</keyword>
<dbReference type="EMBL" id="CR555306">
    <property type="protein sequence ID" value="CAI07816.1"/>
    <property type="molecule type" value="Genomic_DNA"/>
</dbReference>
<dbReference type="RefSeq" id="WP_011237530.1">
    <property type="nucleotide sequence ID" value="NC_006513.1"/>
</dbReference>
<dbReference type="SMR" id="Q5P4E7"/>
<dbReference type="STRING" id="76114.ebA3000"/>
<dbReference type="KEGG" id="eba:ebA3000"/>
<dbReference type="eggNOG" id="ENOG5032S3K">
    <property type="taxonomic scope" value="Bacteria"/>
</dbReference>
<dbReference type="HOGENOM" id="CLU_148047_1_0_4"/>
<dbReference type="OrthoDB" id="9811659at2"/>
<dbReference type="Proteomes" id="UP000006552">
    <property type="component" value="Chromosome"/>
</dbReference>
<dbReference type="GO" id="GO:0005886">
    <property type="term" value="C:plasma membrane"/>
    <property type="evidence" value="ECO:0007669"/>
    <property type="project" value="UniProtKB-SubCell"/>
</dbReference>
<dbReference type="GO" id="GO:0045259">
    <property type="term" value="C:proton-transporting ATP synthase complex"/>
    <property type="evidence" value="ECO:0007669"/>
    <property type="project" value="UniProtKB-KW"/>
</dbReference>
<dbReference type="GO" id="GO:0033177">
    <property type="term" value="C:proton-transporting two-sector ATPase complex, proton-transporting domain"/>
    <property type="evidence" value="ECO:0007669"/>
    <property type="project" value="InterPro"/>
</dbReference>
<dbReference type="GO" id="GO:0008289">
    <property type="term" value="F:lipid binding"/>
    <property type="evidence" value="ECO:0007669"/>
    <property type="project" value="UniProtKB-KW"/>
</dbReference>
<dbReference type="GO" id="GO:0046933">
    <property type="term" value="F:proton-transporting ATP synthase activity, rotational mechanism"/>
    <property type="evidence" value="ECO:0007669"/>
    <property type="project" value="UniProtKB-UniRule"/>
</dbReference>
<dbReference type="CDD" id="cd18185">
    <property type="entry name" value="ATP-synt_Fo_c_ATPE"/>
    <property type="match status" value="1"/>
</dbReference>
<dbReference type="FunFam" id="1.20.20.10:FF:000002">
    <property type="entry name" value="ATP synthase subunit c"/>
    <property type="match status" value="1"/>
</dbReference>
<dbReference type="Gene3D" id="1.20.20.10">
    <property type="entry name" value="F1F0 ATP synthase subunit C"/>
    <property type="match status" value="1"/>
</dbReference>
<dbReference type="HAMAP" id="MF_01396">
    <property type="entry name" value="ATP_synth_c_bact"/>
    <property type="match status" value="1"/>
</dbReference>
<dbReference type="InterPro" id="IPR005953">
    <property type="entry name" value="ATP_synth_csu_bac/chlpt"/>
</dbReference>
<dbReference type="InterPro" id="IPR000454">
    <property type="entry name" value="ATP_synth_F0_csu"/>
</dbReference>
<dbReference type="InterPro" id="IPR020537">
    <property type="entry name" value="ATP_synth_F0_csu_DDCD_BS"/>
</dbReference>
<dbReference type="InterPro" id="IPR038662">
    <property type="entry name" value="ATP_synth_F0_csu_sf"/>
</dbReference>
<dbReference type="InterPro" id="IPR002379">
    <property type="entry name" value="ATPase_proteolipid_c-like_dom"/>
</dbReference>
<dbReference type="InterPro" id="IPR035921">
    <property type="entry name" value="F/V-ATP_Csub_sf"/>
</dbReference>
<dbReference type="NCBIfam" id="TIGR01260">
    <property type="entry name" value="ATP_synt_c"/>
    <property type="match status" value="1"/>
</dbReference>
<dbReference type="NCBIfam" id="NF005363">
    <property type="entry name" value="PRK06876.1"/>
    <property type="match status" value="1"/>
</dbReference>
<dbReference type="Pfam" id="PF00137">
    <property type="entry name" value="ATP-synt_C"/>
    <property type="match status" value="1"/>
</dbReference>
<dbReference type="PRINTS" id="PR00124">
    <property type="entry name" value="ATPASEC"/>
</dbReference>
<dbReference type="SUPFAM" id="SSF81333">
    <property type="entry name" value="F1F0 ATP synthase subunit C"/>
    <property type="match status" value="1"/>
</dbReference>
<dbReference type="PROSITE" id="PS00605">
    <property type="entry name" value="ATPASE_C"/>
    <property type="match status" value="1"/>
</dbReference>
<comment type="function">
    <text evidence="1">F(1)F(0) ATP synthase produces ATP from ADP in the presence of a proton or sodium gradient. F-type ATPases consist of two structural domains, F(1) containing the extramembraneous catalytic core and F(0) containing the membrane proton channel, linked together by a central stalk and a peripheral stalk. During catalysis, ATP synthesis in the catalytic domain of F(1) is coupled via a rotary mechanism of the central stalk subunits to proton translocation.</text>
</comment>
<comment type="function">
    <text evidence="1">Key component of the F(0) channel; it plays a direct role in translocation across the membrane. A homomeric c-ring of between 10-14 subunits forms the central stalk rotor element with the F(1) delta and epsilon subunits.</text>
</comment>
<comment type="subunit">
    <text evidence="1">F-type ATPases have 2 components, F(1) - the catalytic core - and F(0) - the membrane proton channel. F(1) has five subunits: alpha(3), beta(3), gamma(1), delta(1), epsilon(1). F(0) has three main subunits: a(1), b(2) and c(10-14). The alpha and beta chains form an alternating ring which encloses part of the gamma chain. F(1) is attached to F(0) by a central stalk formed by the gamma and epsilon chains, while a peripheral stalk is formed by the delta and b chains.</text>
</comment>
<comment type="subcellular location">
    <subcellularLocation>
        <location evidence="1">Cell inner membrane</location>
        <topology evidence="1">Multi-pass membrane protein</topology>
    </subcellularLocation>
</comment>
<comment type="similarity">
    <text evidence="1">Belongs to the ATPase C chain family.</text>
</comment>
<accession>Q5P4E7</accession>
<proteinExistence type="inferred from homology"/>
<organism>
    <name type="scientific">Aromatoleum aromaticum (strain DSM 19018 / LMG 30748 / EbN1)</name>
    <name type="common">Azoarcus sp. (strain EbN1)</name>
    <dbReference type="NCBI Taxonomy" id="76114"/>
    <lineage>
        <taxon>Bacteria</taxon>
        <taxon>Pseudomonadati</taxon>
        <taxon>Pseudomonadota</taxon>
        <taxon>Betaproteobacteria</taxon>
        <taxon>Rhodocyclales</taxon>
        <taxon>Rhodocyclaceae</taxon>
        <taxon>Aromatoleum</taxon>
    </lineage>
</organism>